<organism>
    <name type="scientific">Burkholderia mallei (strain NCTC 10229)</name>
    <dbReference type="NCBI Taxonomy" id="412022"/>
    <lineage>
        <taxon>Bacteria</taxon>
        <taxon>Pseudomonadati</taxon>
        <taxon>Pseudomonadota</taxon>
        <taxon>Betaproteobacteria</taxon>
        <taxon>Burkholderiales</taxon>
        <taxon>Burkholderiaceae</taxon>
        <taxon>Burkholderia</taxon>
        <taxon>pseudomallei group</taxon>
    </lineage>
</organism>
<proteinExistence type="inferred from homology"/>
<reference key="1">
    <citation type="journal article" date="2010" name="Genome Biol. Evol.">
        <title>Continuing evolution of Burkholderia mallei through genome reduction and large-scale rearrangements.</title>
        <authorList>
            <person name="Losada L."/>
            <person name="Ronning C.M."/>
            <person name="DeShazer D."/>
            <person name="Woods D."/>
            <person name="Fedorova N."/>
            <person name="Kim H.S."/>
            <person name="Shabalina S.A."/>
            <person name="Pearson T.R."/>
            <person name="Brinkac L."/>
            <person name="Tan P."/>
            <person name="Nandi T."/>
            <person name="Crabtree J."/>
            <person name="Badger J."/>
            <person name="Beckstrom-Sternberg S."/>
            <person name="Saqib M."/>
            <person name="Schutzer S.E."/>
            <person name="Keim P."/>
            <person name="Nierman W.C."/>
        </authorList>
    </citation>
    <scope>NUCLEOTIDE SEQUENCE [LARGE SCALE GENOMIC DNA]</scope>
    <source>
        <strain>NCTC 10229</strain>
    </source>
</reference>
<evidence type="ECO:0000255" key="1">
    <source>
        <dbReference type="HAMAP-Rule" id="MF_01398"/>
    </source>
</evidence>
<protein>
    <recommendedName>
        <fullName evidence="1">ATP synthase subunit b</fullName>
    </recommendedName>
    <alternativeName>
        <fullName evidence="1">ATP synthase F(0) sector subunit b</fullName>
    </alternativeName>
    <alternativeName>
        <fullName evidence="1">ATPase subunit I</fullName>
    </alternativeName>
    <alternativeName>
        <fullName evidence="1">F-type ATPase subunit b</fullName>
        <shortName evidence="1">F-ATPase subunit b</shortName>
    </alternativeName>
</protein>
<accession>A2S6K2</accession>
<comment type="function">
    <text evidence="1">F(1)F(0) ATP synthase produces ATP from ADP in the presence of a proton or sodium gradient. F-type ATPases consist of two structural domains, F(1) containing the extramembraneous catalytic core and F(0) containing the membrane proton channel, linked together by a central stalk and a peripheral stalk. During catalysis, ATP synthesis in the catalytic domain of F(1) is coupled via a rotary mechanism of the central stalk subunits to proton translocation.</text>
</comment>
<comment type="function">
    <text evidence="1">Component of the F(0) channel, it forms part of the peripheral stalk, linking F(1) to F(0).</text>
</comment>
<comment type="subunit">
    <text evidence="1">F-type ATPases have 2 components, F(1) - the catalytic core - and F(0) - the membrane proton channel. F(1) has five subunits: alpha(3), beta(3), gamma(1), delta(1), epsilon(1). F(0) has three main subunits: a(1), b(2) and c(10-14). The alpha and beta chains form an alternating ring which encloses part of the gamma chain. F(1) is attached to F(0) by a central stalk formed by the gamma and epsilon chains, while a peripheral stalk is formed by the delta and b chains.</text>
</comment>
<comment type="subcellular location">
    <subcellularLocation>
        <location evidence="1">Cell inner membrane</location>
        <topology evidence="1">Single-pass membrane protein</topology>
    </subcellularLocation>
</comment>
<comment type="similarity">
    <text evidence="1">Belongs to the ATPase B chain family.</text>
</comment>
<gene>
    <name evidence="1" type="primary">atpF</name>
    <name type="ordered locus">BMA10229_A1591</name>
</gene>
<sequence>MNLNATLFAQMVVFLVLAWFTMKFVWPPLINALDERSKKIADGLAAAEKGKAELEAAHKRVDQELAQARNDGQQRIADAEKRALAVADEIKTNAQAEAARIIAQAKAEAEQQIVKARETLRGEVAALAVKGAEQILKREVDQTAHAELLNQLKAEL</sequence>
<dbReference type="EMBL" id="CP000546">
    <property type="protein sequence ID" value="ABN02907.1"/>
    <property type="molecule type" value="Genomic_DNA"/>
</dbReference>
<dbReference type="RefSeq" id="WP_004185283.1">
    <property type="nucleotide sequence ID" value="NC_008836.1"/>
</dbReference>
<dbReference type="SMR" id="A2S6K2"/>
<dbReference type="KEGG" id="bml:BMA10229_A1591"/>
<dbReference type="HOGENOM" id="CLU_079215_4_5_4"/>
<dbReference type="Proteomes" id="UP000002283">
    <property type="component" value="Chromosome I"/>
</dbReference>
<dbReference type="GO" id="GO:0005886">
    <property type="term" value="C:plasma membrane"/>
    <property type="evidence" value="ECO:0007669"/>
    <property type="project" value="UniProtKB-SubCell"/>
</dbReference>
<dbReference type="GO" id="GO:0045259">
    <property type="term" value="C:proton-transporting ATP synthase complex"/>
    <property type="evidence" value="ECO:0007669"/>
    <property type="project" value="UniProtKB-KW"/>
</dbReference>
<dbReference type="GO" id="GO:0046933">
    <property type="term" value="F:proton-transporting ATP synthase activity, rotational mechanism"/>
    <property type="evidence" value="ECO:0007669"/>
    <property type="project" value="UniProtKB-UniRule"/>
</dbReference>
<dbReference type="GO" id="GO:0046961">
    <property type="term" value="F:proton-transporting ATPase activity, rotational mechanism"/>
    <property type="evidence" value="ECO:0007669"/>
    <property type="project" value="TreeGrafter"/>
</dbReference>
<dbReference type="CDD" id="cd06503">
    <property type="entry name" value="ATP-synt_Fo_b"/>
    <property type="match status" value="1"/>
</dbReference>
<dbReference type="Gene3D" id="6.10.250.1580">
    <property type="match status" value="1"/>
</dbReference>
<dbReference type="HAMAP" id="MF_01398">
    <property type="entry name" value="ATP_synth_b_bprime"/>
    <property type="match status" value="1"/>
</dbReference>
<dbReference type="InterPro" id="IPR028987">
    <property type="entry name" value="ATP_synth_B-like_membr_sf"/>
</dbReference>
<dbReference type="InterPro" id="IPR002146">
    <property type="entry name" value="ATP_synth_b/b'su_bac/chlpt"/>
</dbReference>
<dbReference type="InterPro" id="IPR005864">
    <property type="entry name" value="ATP_synth_F0_bsu_bac"/>
</dbReference>
<dbReference type="InterPro" id="IPR050059">
    <property type="entry name" value="ATP_synthase_B_chain"/>
</dbReference>
<dbReference type="NCBIfam" id="TIGR01144">
    <property type="entry name" value="ATP_synt_b"/>
    <property type="match status" value="1"/>
</dbReference>
<dbReference type="NCBIfam" id="NF004411">
    <property type="entry name" value="PRK05759.1-2"/>
    <property type="match status" value="1"/>
</dbReference>
<dbReference type="PANTHER" id="PTHR33445:SF1">
    <property type="entry name" value="ATP SYNTHASE SUBUNIT B"/>
    <property type="match status" value="1"/>
</dbReference>
<dbReference type="PANTHER" id="PTHR33445">
    <property type="entry name" value="ATP SYNTHASE SUBUNIT B', CHLOROPLASTIC"/>
    <property type="match status" value="1"/>
</dbReference>
<dbReference type="Pfam" id="PF00430">
    <property type="entry name" value="ATP-synt_B"/>
    <property type="match status" value="1"/>
</dbReference>
<dbReference type="SUPFAM" id="SSF81573">
    <property type="entry name" value="F1F0 ATP synthase subunit B, membrane domain"/>
    <property type="match status" value="1"/>
</dbReference>
<name>ATPF_BURM9</name>
<feature type="chain" id="PRO_0000368385" description="ATP synthase subunit b">
    <location>
        <begin position="1"/>
        <end position="156"/>
    </location>
</feature>
<feature type="transmembrane region" description="Helical" evidence="1">
    <location>
        <begin position="7"/>
        <end position="29"/>
    </location>
</feature>
<keyword id="KW-0066">ATP synthesis</keyword>
<keyword id="KW-0997">Cell inner membrane</keyword>
<keyword id="KW-1003">Cell membrane</keyword>
<keyword id="KW-0138">CF(0)</keyword>
<keyword id="KW-0375">Hydrogen ion transport</keyword>
<keyword id="KW-0406">Ion transport</keyword>
<keyword id="KW-0472">Membrane</keyword>
<keyword id="KW-0812">Transmembrane</keyword>
<keyword id="KW-1133">Transmembrane helix</keyword>
<keyword id="KW-0813">Transport</keyword>